<keyword id="KW-0378">Hydrolase</keyword>
<keyword id="KW-1185">Reference proteome</keyword>
<evidence type="ECO:0000250" key="1">
    <source>
        <dbReference type="UniProtKB" id="L7N5A6"/>
    </source>
</evidence>
<evidence type="ECO:0000269" key="2">
    <source>
    </source>
</evidence>
<evidence type="ECO:0000305" key="3"/>
<evidence type="ECO:0000312" key="4">
    <source>
        <dbReference type="EMBL" id="CCP43776.1"/>
    </source>
</evidence>
<sequence>MALTRVAAIDCGTNSIRLLIADVGAGLARGELHDVHRETRIVRLGQGVDATGRFAPEAIARTRTALTDYAELLTFHHAERVRMVATSAARDVVNRDVFFAMTADVLGAALPGSAAEVITGAEEAELSFRGAVGELGSAGAPFVVVDLGGGSTEIVLGEHEVVASYSADIGCVRLTERCLHSDPPTLQEVSTARRLVRERLEPALRTVPLELARTWVGLAGTMTTLSALAQSMTAYDAAAIHLSRVPGADLLEVCQRLIGMTRKQRAALAPMHPGRADVIGGGAIVVEELARELRERAGIDQLTVSEHDILDGIALSLAG</sequence>
<feature type="chain" id="PRO_0000440100" description="Exopolyphosphatase 2">
    <location>
        <begin position="1"/>
        <end position="319"/>
    </location>
</feature>
<comment type="function">
    <text evidence="1 2">Degradation of inorganic polyphosphates (polyP). Releases orthophosphate processively from the ends of the polyP chain. Prefers long-chain length polyphosphates as substrates (By similarity). Can also hydrolyze ATP and ADP substrates, but lacks GTPase activity. Cannot hydrolyze pppGpp to ppGpp (PubMed:22880033).</text>
</comment>
<comment type="catalytic activity">
    <reaction evidence="1">
        <text>[phosphate](n) + H2O = [phosphate](n-1) + phosphate + H(+)</text>
        <dbReference type="Rhea" id="RHEA:21528"/>
        <dbReference type="Rhea" id="RHEA-COMP:9859"/>
        <dbReference type="Rhea" id="RHEA-COMP:14279"/>
        <dbReference type="ChEBI" id="CHEBI:15377"/>
        <dbReference type="ChEBI" id="CHEBI:15378"/>
        <dbReference type="ChEBI" id="CHEBI:16838"/>
        <dbReference type="ChEBI" id="CHEBI:43474"/>
        <dbReference type="EC" id="3.6.1.11"/>
    </reaction>
</comment>
<comment type="biophysicochemical properties">
    <kinetics>
        <KM evidence="2">2.6 mM for ATP</KM>
        <Vmax evidence="2">0.7 umol/min/mg enzyme with ATP as substrate</Vmax>
        <text evidence="2">kcat is 4.4 sec(-1) with ATP as substrate.</text>
    </kinetics>
</comment>
<comment type="subunit">
    <text evidence="2">Homodimer.</text>
</comment>
<comment type="similarity">
    <text evidence="3">Belongs to the GppA/Ppx family.</text>
</comment>
<organism>
    <name type="scientific">Mycobacterium tuberculosis (strain ATCC 25618 / H37Rv)</name>
    <dbReference type="NCBI Taxonomy" id="83332"/>
    <lineage>
        <taxon>Bacteria</taxon>
        <taxon>Bacillati</taxon>
        <taxon>Actinomycetota</taxon>
        <taxon>Actinomycetes</taxon>
        <taxon>Mycobacteriales</taxon>
        <taxon>Mycobacteriaceae</taxon>
        <taxon>Mycobacterium</taxon>
        <taxon>Mycobacterium tuberculosis complex</taxon>
    </lineage>
</organism>
<accession>P96374</accession>
<accession>A0A089QQT2</accession>
<accession>F2GHB4</accession>
<accession>I6X033</accession>
<accession>Q7D8Z2</accession>
<gene>
    <name evidence="1" type="primary">ppx2</name>
    <name evidence="4" type="ordered locus">Rv1026</name>
</gene>
<name>PPX2_MYCTU</name>
<dbReference type="EC" id="3.6.1.11" evidence="1"/>
<dbReference type="EMBL" id="AL123456">
    <property type="protein sequence ID" value="CCP43776.1"/>
    <property type="molecule type" value="Genomic_DNA"/>
</dbReference>
<dbReference type="RefSeq" id="NP_215542.1">
    <property type="nucleotide sequence ID" value="NC_000962.3"/>
</dbReference>
<dbReference type="RefSeq" id="WP_003405299.1">
    <property type="nucleotide sequence ID" value="NZ_NVQJ01000018.1"/>
</dbReference>
<dbReference type="SMR" id="P96374"/>
<dbReference type="FunCoup" id="P96374">
    <property type="interactions" value="2"/>
</dbReference>
<dbReference type="STRING" id="83332.Rv1026"/>
<dbReference type="PaxDb" id="83332-Rv1026"/>
<dbReference type="DNASU" id="886089"/>
<dbReference type="GeneID" id="45424998"/>
<dbReference type="GeneID" id="886089"/>
<dbReference type="KEGG" id="mtu:Rv1026"/>
<dbReference type="KEGG" id="mtv:RVBD_1026"/>
<dbReference type="PATRIC" id="fig|83332.111.peg.1138"/>
<dbReference type="TubercuList" id="Rv1026"/>
<dbReference type="eggNOG" id="COG0248">
    <property type="taxonomic scope" value="Bacteria"/>
</dbReference>
<dbReference type="HOGENOM" id="CLU_025908_1_2_11"/>
<dbReference type="InParanoid" id="P96374"/>
<dbReference type="OrthoDB" id="9793035at2"/>
<dbReference type="PhylomeDB" id="P96374"/>
<dbReference type="Proteomes" id="UP000001584">
    <property type="component" value="Chromosome"/>
</dbReference>
<dbReference type="GO" id="GO:0005886">
    <property type="term" value="C:plasma membrane"/>
    <property type="evidence" value="ECO:0007005"/>
    <property type="project" value="MTBBASE"/>
</dbReference>
<dbReference type="GO" id="GO:0004309">
    <property type="term" value="F:exopolyphosphatase activity"/>
    <property type="evidence" value="ECO:0007669"/>
    <property type="project" value="UniProtKB-EC"/>
</dbReference>
<dbReference type="GO" id="GO:0016462">
    <property type="term" value="F:pyrophosphatase activity"/>
    <property type="evidence" value="ECO:0000318"/>
    <property type="project" value="GO_Central"/>
</dbReference>
<dbReference type="CDD" id="cd24119">
    <property type="entry name" value="ASKHA_NBD_MtPPX2-like"/>
    <property type="match status" value="1"/>
</dbReference>
<dbReference type="FunFam" id="3.30.420.40:FF:000305">
    <property type="entry name" value="Exopolyphosphatase 2"/>
    <property type="match status" value="1"/>
</dbReference>
<dbReference type="Gene3D" id="3.30.420.40">
    <property type="match status" value="1"/>
</dbReference>
<dbReference type="Gene3D" id="3.30.420.150">
    <property type="entry name" value="Exopolyphosphatase. Domain 2"/>
    <property type="match status" value="1"/>
</dbReference>
<dbReference type="InterPro" id="IPR043129">
    <property type="entry name" value="ATPase_NBD"/>
</dbReference>
<dbReference type="InterPro" id="IPR050273">
    <property type="entry name" value="GppA/Ppx_hydrolase"/>
</dbReference>
<dbReference type="InterPro" id="IPR003695">
    <property type="entry name" value="Ppx_GppA_N"/>
</dbReference>
<dbReference type="PANTHER" id="PTHR30005">
    <property type="entry name" value="EXOPOLYPHOSPHATASE"/>
    <property type="match status" value="1"/>
</dbReference>
<dbReference type="PANTHER" id="PTHR30005:SF13">
    <property type="entry name" value="EXOPOLYPHOSPHATASE 2"/>
    <property type="match status" value="1"/>
</dbReference>
<dbReference type="Pfam" id="PF02541">
    <property type="entry name" value="Ppx-GppA"/>
    <property type="match status" value="1"/>
</dbReference>
<dbReference type="SUPFAM" id="SSF53067">
    <property type="entry name" value="Actin-like ATPase domain"/>
    <property type="match status" value="2"/>
</dbReference>
<proteinExistence type="evidence at protein level"/>
<reference key="1">
    <citation type="journal article" date="1998" name="Nature">
        <title>Deciphering the biology of Mycobacterium tuberculosis from the complete genome sequence.</title>
        <authorList>
            <person name="Cole S.T."/>
            <person name="Brosch R."/>
            <person name="Parkhill J."/>
            <person name="Garnier T."/>
            <person name="Churcher C.M."/>
            <person name="Harris D.E."/>
            <person name="Gordon S.V."/>
            <person name="Eiglmeier K."/>
            <person name="Gas S."/>
            <person name="Barry C.E. III"/>
            <person name="Tekaia F."/>
            <person name="Badcock K."/>
            <person name="Basham D."/>
            <person name="Brown D."/>
            <person name="Chillingworth T."/>
            <person name="Connor R."/>
            <person name="Davies R.M."/>
            <person name="Devlin K."/>
            <person name="Feltwell T."/>
            <person name="Gentles S."/>
            <person name="Hamlin N."/>
            <person name="Holroyd S."/>
            <person name="Hornsby T."/>
            <person name="Jagels K."/>
            <person name="Krogh A."/>
            <person name="McLean J."/>
            <person name="Moule S."/>
            <person name="Murphy L.D."/>
            <person name="Oliver S."/>
            <person name="Osborne J."/>
            <person name="Quail M.A."/>
            <person name="Rajandream M.A."/>
            <person name="Rogers J."/>
            <person name="Rutter S."/>
            <person name="Seeger K."/>
            <person name="Skelton S."/>
            <person name="Squares S."/>
            <person name="Squares R."/>
            <person name="Sulston J.E."/>
            <person name="Taylor K."/>
            <person name="Whitehead S."/>
            <person name="Barrell B.G."/>
        </authorList>
    </citation>
    <scope>NUCLEOTIDE SEQUENCE [LARGE SCALE GENOMIC DNA]</scope>
    <source>
        <strain>ATCC 25618 / H37Rv</strain>
    </source>
</reference>
<reference key="2">
    <citation type="journal article" date="2011" name="Mol. Cell. Proteomics">
        <title>Proteogenomic analysis of Mycobacterium tuberculosis by high resolution mass spectrometry.</title>
        <authorList>
            <person name="Kelkar D.S."/>
            <person name="Kumar D."/>
            <person name="Kumar P."/>
            <person name="Balakrishnan L."/>
            <person name="Muthusamy B."/>
            <person name="Yadav A.K."/>
            <person name="Shrivastava P."/>
            <person name="Marimuthu A."/>
            <person name="Anand S."/>
            <person name="Sundaram H."/>
            <person name="Kingsbury R."/>
            <person name="Harsha H.C."/>
            <person name="Nair B."/>
            <person name="Prasad T.S."/>
            <person name="Chauhan D.S."/>
            <person name="Katoch K."/>
            <person name="Katoch V.M."/>
            <person name="Kumar P."/>
            <person name="Chaerkady R."/>
            <person name="Ramachandran S."/>
            <person name="Dash D."/>
            <person name="Pandey A."/>
        </authorList>
    </citation>
    <scope>IDENTIFICATION BY MASS SPECTROMETRY [LARGE SCALE ANALYSIS]</scope>
    <source>
        <strain>ATCC 25618 / H37Rv</strain>
    </source>
</reference>
<reference key="3">
    <citation type="journal article" date="2012" name="PLoS ONE">
        <title>The two PPX-GppA homologues from Mycobacterium tuberculosis have distinct biochemical activities.</title>
        <authorList>
            <person name="Choi M.Y."/>
            <person name="Wang Y."/>
            <person name="Wong L.L."/>
            <person name="Lu B.T."/>
            <person name="Chen W.Y."/>
            <person name="Huang J.D."/>
            <person name="Tanner J.A."/>
            <person name="Watt R.M."/>
        </authorList>
    </citation>
    <scope>FUNCTION</scope>
    <scope>BIOPHYSICOCHEMICAL PROPERTIES</scope>
    <scope>SUBUNIT</scope>
    <source>
        <strain>H37Rv</strain>
    </source>
</reference>
<protein>
    <recommendedName>
        <fullName evidence="3">Exopolyphosphatase 2</fullName>
        <shortName evidence="3">ExopolyPase 2</shortName>
        <ecNumber evidence="1">3.6.1.11</ecNumber>
    </recommendedName>
</protein>